<evidence type="ECO:0000255" key="1">
    <source>
        <dbReference type="HAMAP-Rule" id="MF_00373"/>
    </source>
</evidence>
<evidence type="ECO:0000305" key="2"/>
<dbReference type="EMBL" id="CP001390">
    <property type="protein sequence ID" value="ACM20501.1"/>
    <property type="molecule type" value="Genomic_DNA"/>
</dbReference>
<dbReference type="RefSeq" id="WP_012647230.1">
    <property type="nucleotide sequence ID" value="NC_011979.1"/>
</dbReference>
<dbReference type="SMR" id="B9M905"/>
<dbReference type="STRING" id="316067.Geob_2147"/>
<dbReference type="KEGG" id="geo:Geob_2147"/>
<dbReference type="eggNOG" id="COG0227">
    <property type="taxonomic scope" value="Bacteria"/>
</dbReference>
<dbReference type="HOGENOM" id="CLU_064548_7_0_7"/>
<dbReference type="OrthoDB" id="9805609at2"/>
<dbReference type="Proteomes" id="UP000007721">
    <property type="component" value="Chromosome"/>
</dbReference>
<dbReference type="GO" id="GO:1990904">
    <property type="term" value="C:ribonucleoprotein complex"/>
    <property type="evidence" value="ECO:0007669"/>
    <property type="project" value="UniProtKB-KW"/>
</dbReference>
<dbReference type="GO" id="GO:0005840">
    <property type="term" value="C:ribosome"/>
    <property type="evidence" value="ECO:0007669"/>
    <property type="project" value="UniProtKB-KW"/>
</dbReference>
<dbReference type="GO" id="GO:0003735">
    <property type="term" value="F:structural constituent of ribosome"/>
    <property type="evidence" value="ECO:0007669"/>
    <property type="project" value="InterPro"/>
</dbReference>
<dbReference type="GO" id="GO:0006412">
    <property type="term" value="P:translation"/>
    <property type="evidence" value="ECO:0007669"/>
    <property type="project" value="UniProtKB-UniRule"/>
</dbReference>
<dbReference type="Gene3D" id="2.20.150.30">
    <property type="match status" value="1"/>
</dbReference>
<dbReference type="Gene3D" id="2.30.170.40">
    <property type="entry name" value="Ribosomal protein L28/L24"/>
    <property type="match status" value="1"/>
</dbReference>
<dbReference type="HAMAP" id="MF_00373">
    <property type="entry name" value="Ribosomal_bL28"/>
    <property type="match status" value="1"/>
</dbReference>
<dbReference type="InterPro" id="IPR050096">
    <property type="entry name" value="Bacterial_rp_bL28"/>
</dbReference>
<dbReference type="InterPro" id="IPR026569">
    <property type="entry name" value="Ribosomal_bL28"/>
</dbReference>
<dbReference type="InterPro" id="IPR034704">
    <property type="entry name" value="Ribosomal_bL28/bL31-like_sf"/>
</dbReference>
<dbReference type="InterPro" id="IPR001383">
    <property type="entry name" value="Ribosomal_bL28_bact-type"/>
</dbReference>
<dbReference type="InterPro" id="IPR037147">
    <property type="entry name" value="Ribosomal_bL28_sf"/>
</dbReference>
<dbReference type="NCBIfam" id="TIGR00009">
    <property type="entry name" value="L28"/>
    <property type="match status" value="1"/>
</dbReference>
<dbReference type="PANTHER" id="PTHR39080">
    <property type="entry name" value="50S RIBOSOMAL PROTEIN L28"/>
    <property type="match status" value="1"/>
</dbReference>
<dbReference type="PANTHER" id="PTHR39080:SF1">
    <property type="entry name" value="LARGE RIBOSOMAL SUBUNIT PROTEIN BL28A"/>
    <property type="match status" value="1"/>
</dbReference>
<dbReference type="Pfam" id="PF00830">
    <property type="entry name" value="Ribosomal_L28"/>
    <property type="match status" value="1"/>
</dbReference>
<dbReference type="SUPFAM" id="SSF143800">
    <property type="entry name" value="L28p-like"/>
    <property type="match status" value="1"/>
</dbReference>
<feature type="chain" id="PRO_1000195925" description="Large ribosomal subunit protein bL28">
    <location>
        <begin position="1"/>
        <end position="63"/>
    </location>
</feature>
<protein>
    <recommendedName>
        <fullName evidence="1">Large ribosomal subunit protein bL28</fullName>
    </recommendedName>
    <alternativeName>
        <fullName evidence="2">50S ribosomal protein L28</fullName>
    </alternativeName>
</protein>
<comment type="similarity">
    <text evidence="1">Belongs to the bacterial ribosomal protein bL28 family.</text>
</comment>
<reference key="1">
    <citation type="submission" date="2009-01" db="EMBL/GenBank/DDBJ databases">
        <title>Complete sequence of Geobacter sp. FRC-32.</title>
        <authorList>
            <consortium name="US DOE Joint Genome Institute"/>
            <person name="Lucas S."/>
            <person name="Copeland A."/>
            <person name="Lapidus A."/>
            <person name="Glavina del Rio T."/>
            <person name="Dalin E."/>
            <person name="Tice H."/>
            <person name="Bruce D."/>
            <person name="Goodwin L."/>
            <person name="Pitluck S."/>
            <person name="Saunders E."/>
            <person name="Brettin T."/>
            <person name="Detter J.C."/>
            <person name="Han C."/>
            <person name="Larimer F."/>
            <person name="Land M."/>
            <person name="Hauser L."/>
            <person name="Kyrpides N."/>
            <person name="Ovchinnikova G."/>
            <person name="Kostka J."/>
            <person name="Richardson P."/>
        </authorList>
    </citation>
    <scope>NUCLEOTIDE SEQUENCE [LARGE SCALE GENOMIC DNA]</scope>
    <source>
        <strain>DSM 22248 / JCM 15807 / FRC-32</strain>
    </source>
</reference>
<sequence length="63" mass="6919">MSKVCEICGKGPSFGNNVSHANNKTSRTWYPNLQKIKAVKNGTVRSIKVCTRCIRSGHVTKAL</sequence>
<proteinExistence type="inferred from homology"/>
<name>RL28_GEODF</name>
<gene>
    <name evidence="1" type="primary">rpmB</name>
    <name type="ordered locus">Geob_2147</name>
</gene>
<keyword id="KW-1185">Reference proteome</keyword>
<keyword id="KW-0687">Ribonucleoprotein</keyword>
<keyword id="KW-0689">Ribosomal protein</keyword>
<accession>B9M905</accession>
<organism>
    <name type="scientific">Geotalea daltonii (strain DSM 22248 / JCM 15807 / FRC-32)</name>
    <name type="common">Geobacter daltonii</name>
    <dbReference type="NCBI Taxonomy" id="316067"/>
    <lineage>
        <taxon>Bacteria</taxon>
        <taxon>Pseudomonadati</taxon>
        <taxon>Thermodesulfobacteriota</taxon>
        <taxon>Desulfuromonadia</taxon>
        <taxon>Geobacterales</taxon>
        <taxon>Geobacteraceae</taxon>
        <taxon>Geotalea</taxon>
    </lineage>
</organism>